<proteinExistence type="evidence at transcript level"/>
<dbReference type="EMBL" id="AF506210">
    <property type="protein sequence ID" value="AAM34654.1"/>
    <property type="molecule type" value="mRNA"/>
</dbReference>
<dbReference type="EMBL" id="BC094992">
    <property type="protein sequence ID" value="AAH94992.1"/>
    <property type="molecule type" value="mRNA"/>
</dbReference>
<dbReference type="RefSeq" id="NP_775378.1">
    <property type="nucleotide sequence ID" value="NM_173271.2"/>
</dbReference>
<dbReference type="SMR" id="Q8JHI6"/>
<dbReference type="FunCoup" id="Q8JHI6">
    <property type="interactions" value="1927"/>
</dbReference>
<dbReference type="STRING" id="7955.ENSDARP00000031379"/>
<dbReference type="PaxDb" id="7955-ENSDARP00000031379"/>
<dbReference type="Ensembl" id="ENSDART00000033904">
    <property type="protein sequence ID" value="ENSDARP00000031379"/>
    <property type="gene ID" value="ENSDARG00000026448"/>
</dbReference>
<dbReference type="Ensembl" id="ENSDART00000181916">
    <property type="protein sequence ID" value="ENSDARP00000151522"/>
    <property type="gene ID" value="ENSDARG00000109733"/>
</dbReference>
<dbReference type="GeneID" id="797134"/>
<dbReference type="KEGG" id="dre:797134"/>
<dbReference type="AGR" id="ZFIN:ZDB-GENE-021217-1"/>
<dbReference type="CTD" id="55588"/>
<dbReference type="ZFIN" id="ZDB-GENE-021217-1">
    <property type="gene designation" value="med29"/>
</dbReference>
<dbReference type="eggNOG" id="ENOG502QRNJ">
    <property type="taxonomic scope" value="Eukaryota"/>
</dbReference>
<dbReference type="HOGENOM" id="CLU_101133_2_0_1"/>
<dbReference type="InParanoid" id="Q8JHI6"/>
<dbReference type="OMA" id="NHYLPGP"/>
<dbReference type="OrthoDB" id="6366949at2759"/>
<dbReference type="PhylomeDB" id="Q8JHI6"/>
<dbReference type="TreeFam" id="TF326632"/>
<dbReference type="PRO" id="PR:Q8JHI6"/>
<dbReference type="Proteomes" id="UP000000437">
    <property type="component" value="Alternate scaffold 15"/>
</dbReference>
<dbReference type="Proteomes" id="UP000000437">
    <property type="component" value="Chromosome 15"/>
</dbReference>
<dbReference type="Bgee" id="ENSDARG00000026448">
    <property type="expression patterns" value="Expressed in ovary and 23 other cell types or tissues"/>
</dbReference>
<dbReference type="ExpressionAtlas" id="Q8JHI6">
    <property type="expression patterns" value="baseline"/>
</dbReference>
<dbReference type="GO" id="GO:0016592">
    <property type="term" value="C:mediator complex"/>
    <property type="evidence" value="ECO:0000318"/>
    <property type="project" value="GO_Central"/>
</dbReference>
<dbReference type="GO" id="GO:0003712">
    <property type="term" value="F:transcription coregulator activity"/>
    <property type="evidence" value="ECO:0000318"/>
    <property type="project" value="GO_Central"/>
</dbReference>
<dbReference type="GO" id="GO:0042462">
    <property type="term" value="P:eye photoreceptor cell development"/>
    <property type="evidence" value="ECO:0000315"/>
    <property type="project" value="ZFIN"/>
</dbReference>
<dbReference type="GO" id="GO:0006357">
    <property type="term" value="P:regulation of transcription by RNA polymerase II"/>
    <property type="evidence" value="ECO:0000318"/>
    <property type="project" value="GO_Central"/>
</dbReference>
<dbReference type="InterPro" id="IPR021018">
    <property type="entry name" value="Mediator_Med29_met"/>
</dbReference>
<dbReference type="PANTHER" id="PTHR28314">
    <property type="entry name" value="MEDIATOR OF RNA POLYMERASE II TRANSCRIPTION SUBUNIT 29"/>
    <property type="match status" value="1"/>
</dbReference>
<dbReference type="PANTHER" id="PTHR28314:SF1">
    <property type="entry name" value="MEDIATOR OF RNA POLYMERASE II TRANSCRIPTION SUBUNIT 29"/>
    <property type="match status" value="1"/>
</dbReference>
<dbReference type="Pfam" id="PF11568">
    <property type="entry name" value="Med29"/>
    <property type="match status" value="1"/>
</dbReference>
<keyword id="KW-0010">Activator</keyword>
<keyword id="KW-0539">Nucleus</keyword>
<keyword id="KW-1185">Reference proteome</keyword>
<keyword id="KW-0804">Transcription</keyword>
<keyword id="KW-0805">Transcription regulation</keyword>
<comment type="function">
    <text evidence="1">Component of the Mediator complex, a coactivator involved in the regulated transcription of nearly all RNA polymerase II-dependent genes. Mediator functions as a bridge to convey information from gene-specific regulatory proteins to the basal RNA polymerase II transcription machinery. Mediator is recruited to promoters by direct interactions with regulatory proteins and serves as a scaffold for the assembly of a functional preinitiation complex with RNA polymerase II and the general transcription factors (By similarity).</text>
</comment>
<comment type="subunit">
    <text evidence="1">Component of the Mediator complex.</text>
</comment>
<comment type="subcellular location">
    <subcellularLocation>
        <location evidence="1">Nucleus</location>
    </subcellularLocation>
</comment>
<comment type="similarity">
    <text evidence="2">Belongs to the Mediator complex subunit 29 family.</text>
</comment>
<reference key="1">
    <citation type="journal article" date="2002" name="Nat. Genet.">
        <title>Insertional mutagenesis in zebrafish rapidly identifies genes essential for early vertebrate development.</title>
        <authorList>
            <person name="Golling G."/>
            <person name="Amsterdam A."/>
            <person name="Sun Z."/>
            <person name="Antonelli M."/>
            <person name="Maldonado E."/>
            <person name="Chen W."/>
            <person name="Burgess S."/>
            <person name="Haldi M."/>
            <person name="Artzt K."/>
            <person name="Farrington S."/>
            <person name="Lin S.-Y."/>
            <person name="Nissen R.M."/>
            <person name="Hopkins N."/>
        </authorList>
    </citation>
    <scope>NUCLEOTIDE SEQUENCE [LARGE SCALE MRNA]</scope>
</reference>
<reference key="2">
    <citation type="submission" date="2005-05" db="EMBL/GenBank/DDBJ databases">
        <authorList>
            <consortium name="NIH - Zebrafish Gene Collection (ZGC) project"/>
        </authorList>
    </citation>
    <scope>NUCLEOTIDE SEQUENCE [LARGE SCALE MRNA]</scope>
    <source>
        <tissue>Eye</tissue>
    </source>
</reference>
<accession>Q8JHI6</accession>
<protein>
    <recommendedName>
        <fullName>Mediator of RNA polymerase II transcription subunit 29</fullName>
    </recommendedName>
    <alternativeName>
        <fullName>Intersex-like protein</fullName>
    </alternativeName>
    <alternativeName>
        <fullName>Mediator complex subunit 29</fullName>
    </alternativeName>
</protein>
<feature type="chain" id="PRO_0000288061" description="Mediator of RNA polymerase II transcription subunit 29">
    <location>
        <begin position="1"/>
        <end position="179"/>
    </location>
</feature>
<name>MED29_DANRE</name>
<gene>
    <name type="primary">med29</name>
    <name type="synonym">ixl</name>
</gene>
<sequence length="179" mass="19705">MASQQMSTNNAQMSAQQAAVLQQTQAQQLSQQQDFDPVHRFKMLIPPLKDSLQNVMTIASLNFAHNTAIDNGLKTTEKGNDAAVQRFDKSLEEFYALCDQLELCLRLAHECLSQSIDSTKHSPNLVPTATKPDTVQTESLSYSQYLSMIKSQISCAKDIHNALLECSKKIAGKGQGACN</sequence>
<evidence type="ECO:0000250" key="1"/>
<evidence type="ECO:0000305" key="2"/>
<organism>
    <name type="scientific">Danio rerio</name>
    <name type="common">Zebrafish</name>
    <name type="synonym">Brachydanio rerio</name>
    <dbReference type="NCBI Taxonomy" id="7955"/>
    <lineage>
        <taxon>Eukaryota</taxon>
        <taxon>Metazoa</taxon>
        <taxon>Chordata</taxon>
        <taxon>Craniata</taxon>
        <taxon>Vertebrata</taxon>
        <taxon>Euteleostomi</taxon>
        <taxon>Actinopterygii</taxon>
        <taxon>Neopterygii</taxon>
        <taxon>Teleostei</taxon>
        <taxon>Ostariophysi</taxon>
        <taxon>Cypriniformes</taxon>
        <taxon>Danionidae</taxon>
        <taxon>Danioninae</taxon>
        <taxon>Danio</taxon>
    </lineage>
</organism>